<feature type="initiator methionine" description="Removed" evidence="2 3">
    <location>
        <position position="1"/>
    </location>
</feature>
<feature type="chain" id="PRO_0000095122" description="Leukotriene A-4 hydrolase">
    <location>
        <begin position="2"/>
        <end position="611"/>
    </location>
</feature>
<feature type="active site" description="Proton acceptor" evidence="1">
    <location>
        <position position="297"/>
    </location>
</feature>
<feature type="active site" description="Proton donor" evidence="1">
    <location>
        <position position="384"/>
    </location>
</feature>
<feature type="binding site" evidence="1">
    <location>
        <begin position="135"/>
        <end position="137"/>
    </location>
    <ligand>
        <name>a peptide</name>
        <dbReference type="ChEBI" id="CHEBI:60466"/>
    </ligand>
</feature>
<feature type="binding site" evidence="1">
    <location>
        <begin position="267"/>
        <end position="272"/>
    </location>
    <ligand>
        <name>a peptide</name>
        <dbReference type="ChEBI" id="CHEBI:60466"/>
    </ligand>
</feature>
<feature type="binding site" evidence="1">
    <location>
        <position position="296"/>
    </location>
    <ligand>
        <name>Zn(2+)</name>
        <dbReference type="ChEBI" id="CHEBI:29105"/>
        <note>catalytic</note>
    </ligand>
</feature>
<feature type="binding site" evidence="1">
    <location>
        <position position="300"/>
    </location>
    <ligand>
        <name>Zn(2+)</name>
        <dbReference type="ChEBI" id="CHEBI:29105"/>
        <note>catalytic</note>
    </ligand>
</feature>
<feature type="binding site" evidence="1">
    <location>
        <position position="319"/>
    </location>
    <ligand>
        <name>Zn(2+)</name>
        <dbReference type="ChEBI" id="CHEBI:29105"/>
        <note>catalytic</note>
    </ligand>
</feature>
<feature type="binding site" evidence="1">
    <location>
        <begin position="564"/>
        <end position="566"/>
    </location>
    <ligand>
        <name>a peptide</name>
        <dbReference type="ChEBI" id="CHEBI:60466"/>
    </ligand>
</feature>
<feature type="site" description="Essential for epoxide hydrolase activity, but not for aminopeptidase activity" evidence="1">
    <location>
        <position position="376"/>
    </location>
</feature>
<feature type="site" description="Covalently modified during suicide inhibition by leukotrienes" evidence="1">
    <location>
        <position position="379"/>
    </location>
</feature>
<feature type="modified residue" description="N6-acetyllysine" evidence="1">
    <location>
        <position position="73"/>
    </location>
</feature>
<feature type="modified residue" description="N6-acetyllysine" evidence="1">
    <location>
        <position position="337"/>
    </location>
</feature>
<feature type="modified residue" description="N6-acetyllysine" evidence="1">
    <location>
        <position position="414"/>
    </location>
</feature>
<feature type="modified residue" description="Phosphoserine" evidence="1">
    <location>
        <position position="416"/>
    </location>
</feature>
<feature type="modified residue" description="N6-acetyllysine" evidence="1">
    <location>
        <position position="573"/>
    </location>
</feature>
<accession>P19602</accession>
<sequence length="611" mass="68971">MPEVVDTCSLASPATVCRTKHLHLRCSVDFTRRALTGVAALTIQSQEDNLRSLILDTKDLTIEKVVINGQEVKYALGEKQSYKGSPMEISLPIALSKNQEVVIEISFETSPKSSALQWLTPEQTSGKEHPYLFSQCQAIHCRAFLPCQDTPSVKLTYTAEVSVPKELVALMSAIRDGEAPDPADPSRKIYKFSQKVPIPCYLIALVVGALESRKIGPRTLVWSEKEQVDKSAYEFSETESMLKIAEDLGGPYVWGQYDRLVLPPSFSYGGMENPCLTFVTPTLLAGDKSLSNVIAHEISHTWTGNLVTNKTWDHFWLNEGHTVYLERHICGRLFGEKFRHFHALGGWGELQNTVKTLGETQAFTKLVVDLTDTDPDVAYSSVPYEKGFALLFHLEQLLGGPEVFLGFLKAYVEKFSYKSITTDDWKNFLFSHFKDKVDILNQVDWDAWLYSPGLPPIKPNYDMTLTNACIALSQRWITAKEKDLNTFSATDLKDLSSHQVNEFLAQVLQRAPLPLGHVKRMQEVYNCNAINNSEIRFRWLRLCIQSKWEEAIPLALKMATEQGRMKFTRPLFKDLAAFDKSHDQAIQTYHAHKASMHPVTAMLVGKDLKVE</sequence>
<comment type="function">
    <text evidence="1">Bifunctional zinc metalloenzyme that comprises both epoxide hydrolase (EH) and aminopeptidase activities. Acts as an epoxide hydrolase to catalyze the conversion of LTA4 to the pro-inflammatory mediator leukotriene B4 (LTB4). Also has aminopeptidase activity, with high affinity for N-terminal arginines of various synthetic tripeptides. In addition to its pro-inflammatory EH activity, may also counteract inflammation by its aminopeptidase activity, which inactivates by cleavage another neutrophil attractant, the tripeptide Pro-Gly-Pro (PGP), a bioactive fragment of collagen generated by the action of matrix metalloproteinase-9 (MMP9) and prolylendopeptidase (PREPL). Involved also in the biosynthesis of resolvin E1 and 18S-resolvin E1 from eicosapentaenoic acid, two lipid mediators that show potent anti-inflammatory and pro-resolving actions.</text>
</comment>
<comment type="catalytic activity">
    <reaction evidence="1">
        <text>leukotriene A4 + H2O = leukotriene B4</text>
        <dbReference type="Rhea" id="RHEA:22324"/>
        <dbReference type="ChEBI" id="CHEBI:15377"/>
        <dbReference type="ChEBI" id="CHEBI:57461"/>
        <dbReference type="ChEBI" id="CHEBI:57463"/>
        <dbReference type="EC" id="3.3.2.6"/>
    </reaction>
    <physiologicalReaction direction="left-to-right" evidence="1">
        <dbReference type="Rhea" id="RHEA:22325"/>
    </physiologicalReaction>
</comment>
<comment type="catalytic activity">
    <reaction evidence="1">
        <text>(5S,6S)-epoxy-(18R)-hydroxy-(7E,9E,11Z,14Z,16E)-eicosapentaenoate + H2O = resolvin E1</text>
        <dbReference type="Rhea" id="RHEA:50272"/>
        <dbReference type="ChEBI" id="CHEBI:15377"/>
        <dbReference type="ChEBI" id="CHEBI:91000"/>
        <dbReference type="ChEBI" id="CHEBI:132219"/>
    </reaction>
    <physiologicalReaction direction="left-to-right" evidence="1">
        <dbReference type="Rhea" id="RHEA:50273"/>
    </physiologicalReaction>
</comment>
<comment type="catalytic activity">
    <reaction evidence="1">
        <text>(5S,6S)-epoxy-(18S)-hydroxy-(7E,9E,11Z,14Z,16E)-eicosapentaenoate + H2O = 18S-resolvin E1</text>
        <dbReference type="Rhea" id="RHEA:51988"/>
        <dbReference type="ChEBI" id="CHEBI:15377"/>
        <dbReference type="ChEBI" id="CHEBI:134661"/>
        <dbReference type="ChEBI" id="CHEBI:136057"/>
    </reaction>
    <physiologicalReaction direction="left-to-right" evidence="1">
        <dbReference type="Rhea" id="RHEA:51989"/>
    </physiologicalReaction>
</comment>
<comment type="catalytic activity">
    <reaction evidence="1">
        <text>Release of the N-terminal residue from a tripeptide.</text>
        <dbReference type="EC" id="3.4.11.4"/>
    </reaction>
</comment>
<comment type="cofactor">
    <cofactor evidence="1">
        <name>Zn(2+)</name>
        <dbReference type="ChEBI" id="CHEBI:29105"/>
    </cofactor>
    <text evidence="1">Binds 1 zinc ion per subunit.</text>
</comment>
<comment type="activity regulation">
    <text evidence="1">Inhibited by bestatin. The epoxide hydrolase activity is restrained by suicide inactivation that involves binding of LTA4 to Tyr-379. 4-(4-benzylphenyl)thiazol-2-amine (ARM1) selectively inhibits the epoxide hydrolase activity.</text>
</comment>
<comment type="pathway">
    <text evidence="1">Lipid metabolism; leukotriene B4 biosynthesis.</text>
</comment>
<comment type="subunit">
    <text evidence="1">Monomer.</text>
</comment>
<comment type="subcellular location">
    <subcellularLocation>
        <location evidence="1">Cytoplasm</location>
    </subcellularLocation>
</comment>
<comment type="PTM">
    <text evidence="1">Phosphorylation at Ser-416 inhibits leukotriene-A4 hydrolase activity. activity.</text>
</comment>
<comment type="similarity">
    <text evidence="4">Belongs to the peptidase M1 family.</text>
</comment>
<dbReference type="EC" id="3.3.2.6" evidence="1"/>
<dbReference type="EC" id="3.4.11.4" evidence="1"/>
<dbReference type="EMBL" id="D16669">
    <property type="protein sequence ID" value="BAA04077.1"/>
    <property type="molecule type" value="mRNA"/>
</dbReference>
<dbReference type="PIR" id="JC4237">
    <property type="entry name" value="JC4237"/>
</dbReference>
<dbReference type="RefSeq" id="NP_001166450.1">
    <property type="nucleotide sequence ID" value="NM_001172979.1"/>
</dbReference>
<dbReference type="SMR" id="P19602"/>
<dbReference type="FunCoup" id="P19602">
    <property type="interactions" value="3236"/>
</dbReference>
<dbReference type="STRING" id="10141.ENSCPOP00000011748"/>
<dbReference type="BindingDB" id="P19602"/>
<dbReference type="ChEMBL" id="CHEMBL5786"/>
<dbReference type="MEROPS" id="M01.004"/>
<dbReference type="GeneID" id="100135571"/>
<dbReference type="KEGG" id="cpoc:100135571"/>
<dbReference type="CTD" id="4048"/>
<dbReference type="eggNOG" id="KOG1047">
    <property type="taxonomic scope" value="Eukaryota"/>
</dbReference>
<dbReference type="InParanoid" id="P19602"/>
<dbReference type="OrthoDB" id="79562at2759"/>
<dbReference type="BRENDA" id="3.3.2.6">
    <property type="organism ID" value="1225"/>
</dbReference>
<dbReference type="UniPathway" id="UPA00878"/>
<dbReference type="PRO" id="PR:P19602"/>
<dbReference type="Proteomes" id="UP000005447">
    <property type="component" value="Unassembled WGS sequence"/>
</dbReference>
<dbReference type="GO" id="GO:0005829">
    <property type="term" value="C:cytosol"/>
    <property type="evidence" value="ECO:0007669"/>
    <property type="project" value="TreeGrafter"/>
</dbReference>
<dbReference type="GO" id="GO:0005634">
    <property type="term" value="C:nucleus"/>
    <property type="evidence" value="ECO:0007669"/>
    <property type="project" value="TreeGrafter"/>
</dbReference>
<dbReference type="GO" id="GO:0004177">
    <property type="term" value="F:aminopeptidase activity"/>
    <property type="evidence" value="ECO:0000250"/>
    <property type="project" value="UniProtKB"/>
</dbReference>
<dbReference type="GO" id="GO:0004301">
    <property type="term" value="F:epoxide hydrolase activity"/>
    <property type="evidence" value="ECO:0000250"/>
    <property type="project" value="UniProtKB"/>
</dbReference>
<dbReference type="GO" id="GO:0004463">
    <property type="term" value="F:leukotriene-A4 hydrolase activity"/>
    <property type="evidence" value="ECO:0000250"/>
    <property type="project" value="UniProtKB"/>
</dbReference>
<dbReference type="GO" id="GO:0008237">
    <property type="term" value="F:metallopeptidase activity"/>
    <property type="evidence" value="ECO:0007669"/>
    <property type="project" value="UniProtKB-KW"/>
</dbReference>
<dbReference type="GO" id="GO:0045148">
    <property type="term" value="F:tripeptide aminopeptidase activity"/>
    <property type="evidence" value="ECO:0007669"/>
    <property type="project" value="UniProtKB-EC"/>
</dbReference>
<dbReference type="GO" id="GO:0008270">
    <property type="term" value="F:zinc ion binding"/>
    <property type="evidence" value="ECO:0000250"/>
    <property type="project" value="UniProtKB"/>
</dbReference>
<dbReference type="GO" id="GO:0019370">
    <property type="term" value="P:leukotriene biosynthetic process"/>
    <property type="evidence" value="ECO:0000250"/>
    <property type="project" value="UniProtKB"/>
</dbReference>
<dbReference type="GO" id="GO:0043171">
    <property type="term" value="P:peptide catabolic process"/>
    <property type="evidence" value="ECO:0000250"/>
    <property type="project" value="UniProtKB"/>
</dbReference>
<dbReference type="GO" id="GO:0006508">
    <property type="term" value="P:proteolysis"/>
    <property type="evidence" value="ECO:0007669"/>
    <property type="project" value="UniProtKB-KW"/>
</dbReference>
<dbReference type="CDD" id="cd09599">
    <property type="entry name" value="M1_LTA4H"/>
    <property type="match status" value="1"/>
</dbReference>
<dbReference type="FunFam" id="1.10.390.10:FF:000003">
    <property type="entry name" value="Leukotriene A(4) hydrolase"/>
    <property type="match status" value="1"/>
</dbReference>
<dbReference type="FunFam" id="1.25.40.320:FF:000002">
    <property type="entry name" value="Leukotriene A(4) hydrolase"/>
    <property type="match status" value="1"/>
</dbReference>
<dbReference type="FunFam" id="2.60.40.1730:FF:000004">
    <property type="entry name" value="Leukotriene A(4) hydrolase"/>
    <property type="match status" value="1"/>
</dbReference>
<dbReference type="FunFam" id="3.30.2010.30:FF:000001">
    <property type="entry name" value="Leukotriene A(4) hydrolase"/>
    <property type="match status" value="1"/>
</dbReference>
<dbReference type="Gene3D" id="3.30.2010.30">
    <property type="match status" value="1"/>
</dbReference>
<dbReference type="Gene3D" id="1.10.390.10">
    <property type="entry name" value="Neutral Protease Domain 2"/>
    <property type="match status" value="1"/>
</dbReference>
<dbReference type="Gene3D" id="1.25.40.320">
    <property type="entry name" value="Peptidase M1, leukotriene A4 hydrolase/aminopeptidase C-terminal domain"/>
    <property type="match status" value="1"/>
</dbReference>
<dbReference type="Gene3D" id="2.60.40.1730">
    <property type="entry name" value="tricorn interacting facor f3 domain"/>
    <property type="match status" value="1"/>
</dbReference>
<dbReference type="InterPro" id="IPR045357">
    <property type="entry name" value="Aminopeptidase_N-like_N"/>
</dbReference>
<dbReference type="InterPro" id="IPR042097">
    <property type="entry name" value="Aminopeptidase_N-like_N_sf"/>
</dbReference>
<dbReference type="InterPro" id="IPR016024">
    <property type="entry name" value="ARM-type_fold"/>
</dbReference>
<dbReference type="InterPro" id="IPR012777">
    <property type="entry name" value="LTA4H"/>
</dbReference>
<dbReference type="InterPro" id="IPR049980">
    <property type="entry name" value="LTA4H_cat"/>
</dbReference>
<dbReference type="InterPro" id="IPR038502">
    <property type="entry name" value="M1_LTA-4_hydro/amino_C_sf"/>
</dbReference>
<dbReference type="InterPro" id="IPR034015">
    <property type="entry name" value="M1_LTA4H"/>
</dbReference>
<dbReference type="InterPro" id="IPR001930">
    <property type="entry name" value="Peptidase_M1"/>
</dbReference>
<dbReference type="InterPro" id="IPR015211">
    <property type="entry name" value="Peptidase_M1_C"/>
</dbReference>
<dbReference type="InterPro" id="IPR014782">
    <property type="entry name" value="Peptidase_M1_dom"/>
</dbReference>
<dbReference type="InterPro" id="IPR027268">
    <property type="entry name" value="Peptidase_M4/M1_CTD_sf"/>
</dbReference>
<dbReference type="NCBIfam" id="TIGR02411">
    <property type="entry name" value="leuko_A4_hydro"/>
    <property type="match status" value="1"/>
</dbReference>
<dbReference type="PANTHER" id="PTHR45726">
    <property type="entry name" value="LEUKOTRIENE A-4 HYDROLASE"/>
    <property type="match status" value="1"/>
</dbReference>
<dbReference type="PANTHER" id="PTHR45726:SF3">
    <property type="entry name" value="LEUKOTRIENE A-4 HYDROLASE"/>
    <property type="match status" value="1"/>
</dbReference>
<dbReference type="Pfam" id="PF09127">
    <property type="entry name" value="Leuk-A4-hydro_C"/>
    <property type="match status" value="1"/>
</dbReference>
<dbReference type="Pfam" id="PF01433">
    <property type="entry name" value="Peptidase_M1"/>
    <property type="match status" value="1"/>
</dbReference>
<dbReference type="Pfam" id="PF17900">
    <property type="entry name" value="Peptidase_M1_N"/>
    <property type="match status" value="1"/>
</dbReference>
<dbReference type="PRINTS" id="PR00756">
    <property type="entry name" value="ALADIPTASE"/>
</dbReference>
<dbReference type="SMART" id="SM01263">
    <property type="entry name" value="Leuk-A4-hydro_C"/>
    <property type="match status" value="1"/>
</dbReference>
<dbReference type="SUPFAM" id="SSF48371">
    <property type="entry name" value="ARM repeat"/>
    <property type="match status" value="1"/>
</dbReference>
<dbReference type="SUPFAM" id="SSF63737">
    <property type="entry name" value="Leukotriene A4 hydrolase N-terminal domain"/>
    <property type="match status" value="1"/>
</dbReference>
<dbReference type="SUPFAM" id="SSF55486">
    <property type="entry name" value="Metalloproteases ('zincins'), catalytic domain"/>
    <property type="match status" value="1"/>
</dbReference>
<dbReference type="PROSITE" id="PS00142">
    <property type="entry name" value="ZINC_PROTEASE"/>
    <property type="match status" value="1"/>
</dbReference>
<name>LKHA4_CAVPO</name>
<organism>
    <name type="scientific">Cavia porcellus</name>
    <name type="common">Guinea pig</name>
    <dbReference type="NCBI Taxonomy" id="10141"/>
    <lineage>
        <taxon>Eukaryota</taxon>
        <taxon>Metazoa</taxon>
        <taxon>Chordata</taxon>
        <taxon>Craniata</taxon>
        <taxon>Vertebrata</taxon>
        <taxon>Euteleostomi</taxon>
        <taxon>Mammalia</taxon>
        <taxon>Eutheria</taxon>
        <taxon>Euarchontoglires</taxon>
        <taxon>Glires</taxon>
        <taxon>Rodentia</taxon>
        <taxon>Hystricomorpha</taxon>
        <taxon>Caviidae</taxon>
        <taxon>Cavia</taxon>
    </lineage>
</organism>
<proteinExistence type="evidence at protein level"/>
<keyword id="KW-0007">Acetylation</keyword>
<keyword id="KW-0963">Cytoplasm</keyword>
<keyword id="KW-0903">Direct protein sequencing</keyword>
<keyword id="KW-0378">Hydrolase</keyword>
<keyword id="KW-0434">Leukotriene biosynthesis</keyword>
<keyword id="KW-0479">Metal-binding</keyword>
<keyword id="KW-0482">Metalloprotease</keyword>
<keyword id="KW-0597">Phosphoprotein</keyword>
<keyword id="KW-0645">Protease</keyword>
<keyword id="KW-1185">Reference proteome</keyword>
<keyword id="KW-0862">Zinc</keyword>
<evidence type="ECO:0000250" key="1">
    <source>
        <dbReference type="UniProtKB" id="P09960"/>
    </source>
</evidence>
<evidence type="ECO:0000269" key="2">
    <source>
    </source>
</evidence>
<evidence type="ECO:0000269" key="3">
    <source>
    </source>
</evidence>
<evidence type="ECO:0000305" key="4"/>
<gene>
    <name type="primary">LTA4H</name>
</gene>
<protein>
    <recommendedName>
        <fullName>Leukotriene A-4 hydrolase</fullName>
        <shortName>LTA-4 hydrolase</shortName>
        <ecNumber evidence="1">3.3.2.6</ecNumber>
    </recommendedName>
    <alternativeName>
        <fullName>Leukotriene A(4) hydrolase</fullName>
    </alternativeName>
    <alternativeName>
        <fullName>Tripeptide aminopeptidase LTA4H</fullName>
        <ecNumber evidence="1">3.4.11.4</ecNumber>
    </alternativeName>
</protein>
<reference key="1">
    <citation type="journal article" date="1995" name="Gene">
        <title>Amino-acid sequence and tissue distribution of guinea-pig leukotriene A4 hydrolase.</title>
        <authorList>
            <person name="Minami M."/>
            <person name="Mutoh H."/>
            <person name="Ohishi N."/>
            <person name="Honda Z."/>
            <person name="Bito H."/>
            <person name="Shimizu T."/>
        </authorList>
    </citation>
    <scope>NUCLEOTIDE SEQUENCE [MRNA]</scope>
    <source>
        <strain>Hartley</strain>
        <tissue>Lung</tissue>
    </source>
</reference>
<reference key="2">
    <citation type="journal article" date="1988" name="Eur. J. Biochem.">
        <title>Guinea-pig liver leukotriene A4 hydrolase. Purification, characterization and structural properties.</title>
        <authorList>
            <person name="Haeggstroem J."/>
            <person name="Bergman T."/>
            <person name="Joernvall H."/>
            <person name="Raadmark O."/>
        </authorList>
    </citation>
    <scope>PROTEIN SEQUENCE OF 2-21</scope>
    <source>
        <tissue>Liver</tissue>
    </source>
</reference>
<reference key="3">
    <citation type="journal article" date="1989" name="J. Biochem.">
        <title>Leukotriene A4 hydrolase from guinea pig lung: the presence of two catalytically active forms.</title>
        <authorList>
            <person name="Bito H."/>
            <person name="Ohishi N."/>
            <person name="Miki I."/>
            <person name="Minami M."/>
            <person name="Tanabe T."/>
            <person name="Shimizu T."/>
            <person name="Seyama Y."/>
        </authorList>
    </citation>
    <scope>PROTEIN SEQUENCE OF 2-21</scope>
    <source>
        <strain>Hartley</strain>
        <tissue>Lung</tissue>
    </source>
</reference>